<name>GLPG_SHIBS</name>
<evidence type="ECO:0000255" key="1">
    <source>
        <dbReference type="HAMAP-Rule" id="MF_01594"/>
    </source>
</evidence>
<protein>
    <recommendedName>
        <fullName evidence="1">Rhomboid protease GlpG</fullName>
        <ecNumber evidence="1">3.4.21.105</ecNumber>
    </recommendedName>
    <alternativeName>
        <fullName evidence="1">Intramembrane serine protease</fullName>
    </alternativeName>
</protein>
<reference key="1">
    <citation type="journal article" date="2005" name="Nucleic Acids Res.">
        <title>Genome dynamics and diversity of Shigella species, the etiologic agents of bacillary dysentery.</title>
        <authorList>
            <person name="Yang F."/>
            <person name="Yang J."/>
            <person name="Zhang X."/>
            <person name="Chen L."/>
            <person name="Jiang Y."/>
            <person name="Yan Y."/>
            <person name="Tang X."/>
            <person name="Wang J."/>
            <person name="Xiong Z."/>
            <person name="Dong J."/>
            <person name="Xue Y."/>
            <person name="Zhu Y."/>
            <person name="Xu X."/>
            <person name="Sun L."/>
            <person name="Chen S."/>
            <person name="Nie H."/>
            <person name="Peng J."/>
            <person name="Xu J."/>
            <person name="Wang Y."/>
            <person name="Yuan Z."/>
            <person name="Wen Y."/>
            <person name="Yao Z."/>
            <person name="Shen Y."/>
            <person name="Qiang B."/>
            <person name="Hou Y."/>
            <person name="Yu J."/>
            <person name="Jin Q."/>
        </authorList>
    </citation>
    <scope>NUCLEOTIDE SEQUENCE [LARGE SCALE GENOMIC DNA]</scope>
    <source>
        <strain>Sb227</strain>
    </source>
</reference>
<comment type="function">
    <text evidence="1">Rhomboid-type serine protease that catalyzes intramembrane proteolysis.</text>
</comment>
<comment type="catalytic activity">
    <reaction evidence="1">
        <text>Cleaves type-1 transmembrane domains using a catalytic dyad composed of serine and histidine that are contributed by different transmembrane domains.</text>
        <dbReference type="EC" id="3.4.21.105"/>
    </reaction>
</comment>
<comment type="subcellular location">
    <subcellularLocation>
        <location evidence="1">Cell inner membrane</location>
        <topology evidence="1">Multi-pass membrane protein</topology>
    </subcellularLocation>
</comment>
<comment type="similarity">
    <text evidence="1">Belongs to the peptidase S54 family.</text>
</comment>
<feature type="chain" id="PRO_0000321693" description="Rhomboid protease GlpG">
    <location>
        <begin position="1"/>
        <end position="276"/>
    </location>
</feature>
<feature type="transmembrane region" description="Helical" evidence="1">
    <location>
        <begin position="94"/>
        <end position="114"/>
    </location>
</feature>
<feature type="transmembrane region" description="Helical" evidence="1">
    <location>
        <begin position="142"/>
        <end position="162"/>
    </location>
</feature>
<feature type="transmembrane region" description="Helical" evidence="1">
    <location>
        <begin position="169"/>
        <end position="189"/>
    </location>
</feature>
<feature type="transmembrane region" description="Helical" evidence="1">
    <location>
        <begin position="192"/>
        <end position="212"/>
    </location>
</feature>
<feature type="transmembrane region" description="Helical" evidence="1">
    <location>
        <begin position="229"/>
        <end position="249"/>
    </location>
</feature>
<feature type="transmembrane region" description="Helical" evidence="1">
    <location>
        <begin position="250"/>
        <end position="270"/>
    </location>
</feature>
<feature type="active site" description="Nucleophile" evidence="1">
    <location>
        <position position="201"/>
    </location>
</feature>
<feature type="active site" evidence="1">
    <location>
        <position position="254"/>
    </location>
</feature>
<dbReference type="EC" id="3.4.21.105" evidence="1"/>
<dbReference type="EMBL" id="CP000036">
    <property type="protein sequence ID" value="ABB67899.1"/>
    <property type="molecule type" value="Genomic_DNA"/>
</dbReference>
<dbReference type="RefSeq" id="WP_000928730.1">
    <property type="nucleotide sequence ID" value="NC_007613.1"/>
</dbReference>
<dbReference type="SMR" id="Q31VK9"/>
<dbReference type="KEGG" id="sbo:SBO_3412"/>
<dbReference type="HOGENOM" id="CLU_058989_0_0_6"/>
<dbReference type="Proteomes" id="UP000007067">
    <property type="component" value="Chromosome"/>
</dbReference>
<dbReference type="GO" id="GO:0005886">
    <property type="term" value="C:plasma membrane"/>
    <property type="evidence" value="ECO:0007669"/>
    <property type="project" value="UniProtKB-SubCell"/>
</dbReference>
<dbReference type="GO" id="GO:0004252">
    <property type="term" value="F:serine-type endopeptidase activity"/>
    <property type="evidence" value="ECO:0007669"/>
    <property type="project" value="UniProtKB-UniRule"/>
</dbReference>
<dbReference type="GO" id="GO:0006508">
    <property type="term" value="P:proteolysis"/>
    <property type="evidence" value="ECO:0007669"/>
    <property type="project" value="UniProtKB-UniRule"/>
</dbReference>
<dbReference type="FunFam" id="1.20.1540.10:FF:000003">
    <property type="entry name" value="Rhomboid protease GlpG"/>
    <property type="match status" value="1"/>
</dbReference>
<dbReference type="FunFam" id="3.30.70.2350:FF:000001">
    <property type="entry name" value="Rhomboid protease GlpG"/>
    <property type="match status" value="1"/>
</dbReference>
<dbReference type="Gene3D" id="3.30.70.2350">
    <property type="match status" value="1"/>
</dbReference>
<dbReference type="Gene3D" id="1.20.1540.10">
    <property type="entry name" value="Rhomboid-like"/>
    <property type="match status" value="1"/>
</dbReference>
<dbReference type="HAMAP" id="MF_01594">
    <property type="entry name" value="Rhomboid_GlpG"/>
    <property type="match status" value="1"/>
</dbReference>
<dbReference type="InterPro" id="IPR038236">
    <property type="entry name" value="GlpG_N_sf"/>
</dbReference>
<dbReference type="InterPro" id="IPR022732">
    <property type="entry name" value="Peptidase_S54_GlpG_N"/>
</dbReference>
<dbReference type="InterPro" id="IPR022764">
    <property type="entry name" value="Peptidase_S54_rhomboid_dom"/>
</dbReference>
<dbReference type="InterPro" id="IPR035952">
    <property type="entry name" value="Rhomboid-like_sf"/>
</dbReference>
<dbReference type="InterPro" id="IPR023662">
    <property type="entry name" value="Rhomboid_protease_GlpG"/>
</dbReference>
<dbReference type="NCBIfam" id="NF008155">
    <property type="entry name" value="PRK10907.1"/>
    <property type="match status" value="1"/>
</dbReference>
<dbReference type="NCBIfam" id="TIGR04239">
    <property type="entry name" value="rhombo_GlpG"/>
    <property type="match status" value="1"/>
</dbReference>
<dbReference type="PANTHER" id="PTHR43066:SF26">
    <property type="entry name" value="RHOMBOID PROTEASE GLPG"/>
    <property type="match status" value="1"/>
</dbReference>
<dbReference type="PANTHER" id="PTHR43066">
    <property type="entry name" value="RHOMBOID-RELATED PROTEIN"/>
    <property type="match status" value="1"/>
</dbReference>
<dbReference type="Pfam" id="PF01694">
    <property type="entry name" value="Rhomboid"/>
    <property type="match status" value="1"/>
</dbReference>
<dbReference type="Pfam" id="PF12122">
    <property type="entry name" value="Rhomboid_N"/>
    <property type="match status" value="1"/>
</dbReference>
<dbReference type="SUPFAM" id="SSF144091">
    <property type="entry name" value="Rhomboid-like"/>
    <property type="match status" value="1"/>
</dbReference>
<proteinExistence type="inferred from homology"/>
<accession>Q31VK9</accession>
<organism>
    <name type="scientific">Shigella boydii serotype 4 (strain Sb227)</name>
    <dbReference type="NCBI Taxonomy" id="300268"/>
    <lineage>
        <taxon>Bacteria</taxon>
        <taxon>Pseudomonadati</taxon>
        <taxon>Pseudomonadota</taxon>
        <taxon>Gammaproteobacteria</taxon>
        <taxon>Enterobacterales</taxon>
        <taxon>Enterobacteriaceae</taxon>
        <taxon>Shigella</taxon>
    </lineage>
</organism>
<sequence>MLMITSFANPRVAQAFVDYMATQGVILTIQQHNQSDVWLADESQAERVRAELARFLENPADPRYLAASWQAGHTGSGLHYRRYPFFAALRERAGPVTWVVMIACVVVFIAMQILGDQEVMLWLAWPFDPTLKFEFWRYFTHALMHFSLMHILFNLLWWWYLGGAVEKRLGSGKLIVITLISALLSGYVQQKFSGPWFGGLSGVVYALMGYVWLRGERDPQSGIYLQRGLIIFALIWIIAGWFDLFGMSMANGAHIAGLAVGLAMAFVDSLNARKRK</sequence>
<gene>
    <name evidence="1" type="primary">glpG</name>
    <name type="ordered locus">SBO_3412</name>
</gene>
<keyword id="KW-0997">Cell inner membrane</keyword>
<keyword id="KW-1003">Cell membrane</keyword>
<keyword id="KW-0378">Hydrolase</keyword>
<keyword id="KW-0472">Membrane</keyword>
<keyword id="KW-0645">Protease</keyword>
<keyword id="KW-0720">Serine protease</keyword>
<keyword id="KW-0812">Transmembrane</keyword>
<keyword id="KW-1133">Transmembrane helix</keyword>